<protein>
    <recommendedName>
        <fullName evidence="1">Cysteine--tRNA ligase</fullName>
        <ecNumber evidence="1">6.1.1.16</ecNumber>
    </recommendedName>
    <alternativeName>
        <fullName evidence="1">Cysteinyl-tRNA synthetase</fullName>
        <shortName evidence="1">CysRS</shortName>
    </alternativeName>
</protein>
<gene>
    <name evidence="1" type="primary">cysS</name>
    <name type="ordered locus">H16_A1221</name>
</gene>
<proteinExistence type="inferred from homology"/>
<keyword id="KW-0030">Aminoacyl-tRNA synthetase</keyword>
<keyword id="KW-0067">ATP-binding</keyword>
<keyword id="KW-0963">Cytoplasm</keyword>
<keyword id="KW-0436">Ligase</keyword>
<keyword id="KW-0479">Metal-binding</keyword>
<keyword id="KW-0547">Nucleotide-binding</keyword>
<keyword id="KW-0648">Protein biosynthesis</keyword>
<keyword id="KW-1185">Reference proteome</keyword>
<keyword id="KW-0862">Zinc</keyword>
<organism>
    <name type="scientific">Cupriavidus necator (strain ATCC 17699 / DSM 428 / KCTC 22496 / NCIMB 10442 / H16 / Stanier 337)</name>
    <name type="common">Ralstonia eutropha</name>
    <dbReference type="NCBI Taxonomy" id="381666"/>
    <lineage>
        <taxon>Bacteria</taxon>
        <taxon>Pseudomonadati</taxon>
        <taxon>Pseudomonadota</taxon>
        <taxon>Betaproteobacteria</taxon>
        <taxon>Burkholderiales</taxon>
        <taxon>Burkholderiaceae</taxon>
        <taxon>Cupriavidus</taxon>
    </lineage>
</organism>
<comment type="catalytic activity">
    <reaction evidence="1">
        <text>tRNA(Cys) + L-cysteine + ATP = L-cysteinyl-tRNA(Cys) + AMP + diphosphate</text>
        <dbReference type="Rhea" id="RHEA:17773"/>
        <dbReference type="Rhea" id="RHEA-COMP:9661"/>
        <dbReference type="Rhea" id="RHEA-COMP:9679"/>
        <dbReference type="ChEBI" id="CHEBI:30616"/>
        <dbReference type="ChEBI" id="CHEBI:33019"/>
        <dbReference type="ChEBI" id="CHEBI:35235"/>
        <dbReference type="ChEBI" id="CHEBI:78442"/>
        <dbReference type="ChEBI" id="CHEBI:78517"/>
        <dbReference type="ChEBI" id="CHEBI:456215"/>
        <dbReference type="EC" id="6.1.1.16"/>
    </reaction>
</comment>
<comment type="cofactor">
    <cofactor evidence="1">
        <name>Zn(2+)</name>
        <dbReference type="ChEBI" id="CHEBI:29105"/>
    </cofactor>
    <text evidence="1">Binds 1 zinc ion per subunit.</text>
</comment>
<comment type="subunit">
    <text evidence="1">Monomer.</text>
</comment>
<comment type="subcellular location">
    <subcellularLocation>
        <location evidence="1">Cytoplasm</location>
    </subcellularLocation>
</comment>
<comment type="similarity">
    <text evidence="1">Belongs to the class-I aminoacyl-tRNA synthetase family.</text>
</comment>
<reference key="1">
    <citation type="journal article" date="2006" name="Nat. Biotechnol.">
        <title>Genome sequence of the bioplastic-producing 'Knallgas' bacterium Ralstonia eutropha H16.</title>
        <authorList>
            <person name="Pohlmann A."/>
            <person name="Fricke W.F."/>
            <person name="Reinecke F."/>
            <person name="Kusian B."/>
            <person name="Liesegang H."/>
            <person name="Cramm R."/>
            <person name="Eitinger T."/>
            <person name="Ewering C."/>
            <person name="Poetter M."/>
            <person name="Schwartz E."/>
            <person name="Strittmatter A."/>
            <person name="Voss I."/>
            <person name="Gottschalk G."/>
            <person name="Steinbuechel A."/>
            <person name="Friedrich B."/>
            <person name="Bowien B."/>
        </authorList>
    </citation>
    <scope>NUCLEOTIDE SEQUENCE [LARGE SCALE GENOMIC DNA]</scope>
    <source>
        <strain>ATCC 17699 / DSM 428 / KCTC 22496 / NCIMB 10442 / H16 / Stanier 337</strain>
    </source>
</reference>
<sequence>MQLLNIYNTLAREKQPFVPIEPGKVRMYVCGMTVYDYCHVGHARVMVVFDMVHRWLRAAGYEVTYVQNITDIDDKIIRRAAENGETIGELTTRFIQYMHEDAAALGVIRPDHEPRATDYVPQMLDMIGKLEAKGLAYQASDGDVNYSVRKFAGYGKLSGKSLEDLRAGERVSANDAKQDPLDFVLWKSAKASEPPESKWDSKWGAGRPGWHIECSAMSCTLLGEHFDIHGGGADLQFPHHENEIAQSEGASGKPFVNMWMHNGFVRINDEKMSKSLGNFFTIREVLKSYDAEVVRFFILRAHYRSPLNYSDAHLDDARHALTRLYTALKDSQPGGCAVDWDEPHARRFAEAMGDDFNTPIAMSVLFDLASEINRTGSTAAARQLKGLAGTLGLLERDPHTFLQGGRSDDGISPEQIETLIAARKTAKVERNFAEADRIRAQLLEAGIVLEDKPGGATEWRRA</sequence>
<feature type="chain" id="PRO_1000006602" description="Cysteine--tRNA ligase">
    <location>
        <begin position="1"/>
        <end position="462"/>
    </location>
</feature>
<feature type="short sequence motif" description="'HIGH' region">
    <location>
        <begin position="32"/>
        <end position="42"/>
    </location>
</feature>
<feature type="short sequence motif" description="'KMSKS' region">
    <location>
        <begin position="271"/>
        <end position="275"/>
    </location>
</feature>
<feature type="binding site" evidence="1">
    <location>
        <position position="30"/>
    </location>
    <ligand>
        <name>Zn(2+)</name>
        <dbReference type="ChEBI" id="CHEBI:29105"/>
    </ligand>
</feature>
<feature type="binding site" evidence="1">
    <location>
        <position position="214"/>
    </location>
    <ligand>
        <name>Zn(2+)</name>
        <dbReference type="ChEBI" id="CHEBI:29105"/>
    </ligand>
</feature>
<feature type="binding site" evidence="1">
    <location>
        <position position="239"/>
    </location>
    <ligand>
        <name>Zn(2+)</name>
        <dbReference type="ChEBI" id="CHEBI:29105"/>
    </ligand>
</feature>
<feature type="binding site" evidence="1">
    <location>
        <position position="243"/>
    </location>
    <ligand>
        <name>Zn(2+)</name>
        <dbReference type="ChEBI" id="CHEBI:29105"/>
    </ligand>
</feature>
<feature type="binding site" evidence="1">
    <location>
        <position position="274"/>
    </location>
    <ligand>
        <name>ATP</name>
        <dbReference type="ChEBI" id="CHEBI:30616"/>
    </ligand>
</feature>
<evidence type="ECO:0000255" key="1">
    <source>
        <dbReference type="HAMAP-Rule" id="MF_00041"/>
    </source>
</evidence>
<accession>Q0KCA9</accession>
<name>SYC_CUPNH</name>
<dbReference type="EC" id="6.1.1.16" evidence="1"/>
<dbReference type="EMBL" id="AM260479">
    <property type="protein sequence ID" value="CAJ92362.1"/>
    <property type="molecule type" value="Genomic_DNA"/>
</dbReference>
<dbReference type="RefSeq" id="WP_011614939.1">
    <property type="nucleotide sequence ID" value="NC_008313.1"/>
</dbReference>
<dbReference type="SMR" id="Q0KCA9"/>
<dbReference type="STRING" id="381666.H16_A1221"/>
<dbReference type="KEGG" id="reh:H16_A1221"/>
<dbReference type="PATRIC" id="fig|381666.6.peg.1610"/>
<dbReference type="eggNOG" id="COG0215">
    <property type="taxonomic scope" value="Bacteria"/>
</dbReference>
<dbReference type="HOGENOM" id="CLU_013528_0_1_4"/>
<dbReference type="OrthoDB" id="9815130at2"/>
<dbReference type="Proteomes" id="UP000008210">
    <property type="component" value="Chromosome 1"/>
</dbReference>
<dbReference type="GO" id="GO:0005829">
    <property type="term" value="C:cytosol"/>
    <property type="evidence" value="ECO:0007669"/>
    <property type="project" value="TreeGrafter"/>
</dbReference>
<dbReference type="GO" id="GO:0005524">
    <property type="term" value="F:ATP binding"/>
    <property type="evidence" value="ECO:0007669"/>
    <property type="project" value="UniProtKB-UniRule"/>
</dbReference>
<dbReference type="GO" id="GO:0004817">
    <property type="term" value="F:cysteine-tRNA ligase activity"/>
    <property type="evidence" value="ECO:0007669"/>
    <property type="project" value="UniProtKB-UniRule"/>
</dbReference>
<dbReference type="GO" id="GO:0008270">
    <property type="term" value="F:zinc ion binding"/>
    <property type="evidence" value="ECO:0007669"/>
    <property type="project" value="UniProtKB-UniRule"/>
</dbReference>
<dbReference type="GO" id="GO:0006423">
    <property type="term" value="P:cysteinyl-tRNA aminoacylation"/>
    <property type="evidence" value="ECO:0007669"/>
    <property type="project" value="UniProtKB-UniRule"/>
</dbReference>
<dbReference type="CDD" id="cd07963">
    <property type="entry name" value="Anticodon_Ia_Cys"/>
    <property type="match status" value="1"/>
</dbReference>
<dbReference type="CDD" id="cd00672">
    <property type="entry name" value="CysRS_core"/>
    <property type="match status" value="1"/>
</dbReference>
<dbReference type="FunFam" id="3.40.50.620:FF:000009">
    <property type="entry name" value="Cysteine--tRNA ligase"/>
    <property type="match status" value="1"/>
</dbReference>
<dbReference type="Gene3D" id="1.20.120.1910">
    <property type="entry name" value="Cysteine-tRNA ligase, C-terminal anti-codon recognition domain"/>
    <property type="match status" value="1"/>
</dbReference>
<dbReference type="Gene3D" id="3.40.50.620">
    <property type="entry name" value="HUPs"/>
    <property type="match status" value="1"/>
</dbReference>
<dbReference type="HAMAP" id="MF_00041">
    <property type="entry name" value="Cys_tRNA_synth"/>
    <property type="match status" value="1"/>
</dbReference>
<dbReference type="InterPro" id="IPR015803">
    <property type="entry name" value="Cys-tRNA-ligase"/>
</dbReference>
<dbReference type="InterPro" id="IPR015273">
    <property type="entry name" value="Cys-tRNA-synt_Ia_DALR"/>
</dbReference>
<dbReference type="InterPro" id="IPR024909">
    <property type="entry name" value="Cys-tRNA/MSH_ligase"/>
</dbReference>
<dbReference type="InterPro" id="IPR056411">
    <property type="entry name" value="CysS_C"/>
</dbReference>
<dbReference type="InterPro" id="IPR014729">
    <property type="entry name" value="Rossmann-like_a/b/a_fold"/>
</dbReference>
<dbReference type="InterPro" id="IPR032678">
    <property type="entry name" value="tRNA-synt_1_cat_dom"/>
</dbReference>
<dbReference type="InterPro" id="IPR009080">
    <property type="entry name" value="tRNAsynth_Ia_anticodon-bd"/>
</dbReference>
<dbReference type="NCBIfam" id="TIGR00435">
    <property type="entry name" value="cysS"/>
    <property type="match status" value="1"/>
</dbReference>
<dbReference type="PANTHER" id="PTHR10890:SF3">
    <property type="entry name" value="CYSTEINE--TRNA LIGASE, CYTOPLASMIC"/>
    <property type="match status" value="1"/>
</dbReference>
<dbReference type="PANTHER" id="PTHR10890">
    <property type="entry name" value="CYSTEINYL-TRNA SYNTHETASE"/>
    <property type="match status" value="1"/>
</dbReference>
<dbReference type="Pfam" id="PF23493">
    <property type="entry name" value="CysS_C"/>
    <property type="match status" value="1"/>
</dbReference>
<dbReference type="Pfam" id="PF09190">
    <property type="entry name" value="DALR_2"/>
    <property type="match status" value="1"/>
</dbReference>
<dbReference type="Pfam" id="PF01406">
    <property type="entry name" value="tRNA-synt_1e"/>
    <property type="match status" value="1"/>
</dbReference>
<dbReference type="PRINTS" id="PR00983">
    <property type="entry name" value="TRNASYNTHCYS"/>
</dbReference>
<dbReference type="SMART" id="SM00840">
    <property type="entry name" value="DALR_2"/>
    <property type="match status" value="1"/>
</dbReference>
<dbReference type="SUPFAM" id="SSF47323">
    <property type="entry name" value="Anticodon-binding domain of a subclass of class I aminoacyl-tRNA synthetases"/>
    <property type="match status" value="1"/>
</dbReference>
<dbReference type="SUPFAM" id="SSF52374">
    <property type="entry name" value="Nucleotidylyl transferase"/>
    <property type="match status" value="1"/>
</dbReference>